<organism>
    <name type="scientific">Colwellia psychrerythraea (strain 34H / ATCC BAA-681)</name>
    <name type="common">Vibrio psychroerythus</name>
    <dbReference type="NCBI Taxonomy" id="167879"/>
    <lineage>
        <taxon>Bacteria</taxon>
        <taxon>Pseudomonadati</taxon>
        <taxon>Pseudomonadota</taxon>
        <taxon>Gammaproteobacteria</taxon>
        <taxon>Alteromonadales</taxon>
        <taxon>Colwelliaceae</taxon>
        <taxon>Colwellia</taxon>
    </lineage>
</organism>
<name>RSMH_COLP3</name>
<protein>
    <recommendedName>
        <fullName evidence="1">Ribosomal RNA small subunit methyltransferase H</fullName>
        <ecNumber evidence="1">2.1.1.199</ecNumber>
    </recommendedName>
    <alternativeName>
        <fullName evidence="1">16S rRNA m(4)C1402 methyltransferase</fullName>
    </alternativeName>
    <alternativeName>
        <fullName evidence="1">rRNA (cytosine-N(4)-)-methyltransferase RsmH</fullName>
    </alternativeName>
</protein>
<proteinExistence type="inferred from homology"/>
<sequence>MELDTTHISVLLNEAVDGLAITDDGCYIDCTFGRGGHSSVILSKLSDNGRLIAIDRDPTAITAAEKFKDDKRFLIEHQGFAALAEIAEKHELTGKVDGILLDLGVSSPQLDEAERGFSFMKDGPLDMRMDTSKGQTAAEWLAVADVEDITWVLRTFGEEKHAWRIANAIVDTREETPLTRTSQLAKLIKTTAPQREIKKHPATRSFQAIRMYINSELDQIEKALVASLDVLAEGGRLVVISFHSLEDRLVKQFMKKHSQGKKVPRGLPISEIELNKGKKLSLVGRRLKPSQTEVEENVRSRSSVLRVAERLERNTD</sequence>
<keyword id="KW-0963">Cytoplasm</keyword>
<keyword id="KW-0489">Methyltransferase</keyword>
<keyword id="KW-0698">rRNA processing</keyword>
<keyword id="KW-0949">S-adenosyl-L-methionine</keyword>
<keyword id="KW-0808">Transferase</keyword>
<gene>
    <name evidence="1" type="primary">rsmH</name>
    <name type="synonym">mraW</name>
    <name type="ordered locus">CPS_4473</name>
</gene>
<reference key="1">
    <citation type="journal article" date="2005" name="Proc. Natl. Acad. Sci. U.S.A.">
        <title>The psychrophilic lifestyle as revealed by the genome sequence of Colwellia psychrerythraea 34H through genomic and proteomic analyses.</title>
        <authorList>
            <person name="Methe B.A."/>
            <person name="Nelson K.E."/>
            <person name="Deming J.W."/>
            <person name="Momen B."/>
            <person name="Melamud E."/>
            <person name="Zhang X."/>
            <person name="Moult J."/>
            <person name="Madupu R."/>
            <person name="Nelson W.C."/>
            <person name="Dodson R.J."/>
            <person name="Brinkac L.M."/>
            <person name="Daugherty S.C."/>
            <person name="Durkin A.S."/>
            <person name="DeBoy R.T."/>
            <person name="Kolonay J.F."/>
            <person name="Sullivan S.A."/>
            <person name="Zhou L."/>
            <person name="Davidsen T.M."/>
            <person name="Wu M."/>
            <person name="Huston A.L."/>
            <person name="Lewis M."/>
            <person name="Weaver B."/>
            <person name="Weidman J.F."/>
            <person name="Khouri H."/>
            <person name="Utterback T.R."/>
            <person name="Feldblyum T.V."/>
            <person name="Fraser C.M."/>
        </authorList>
    </citation>
    <scope>NUCLEOTIDE SEQUENCE [LARGE SCALE GENOMIC DNA]</scope>
    <source>
        <strain>34H / ATCC BAA-681</strain>
    </source>
</reference>
<evidence type="ECO:0000255" key="1">
    <source>
        <dbReference type="HAMAP-Rule" id="MF_01007"/>
    </source>
</evidence>
<comment type="function">
    <text evidence="1">Specifically methylates the N4 position of cytidine in position 1402 (C1402) of 16S rRNA.</text>
</comment>
<comment type="catalytic activity">
    <reaction evidence="1">
        <text>cytidine(1402) in 16S rRNA + S-adenosyl-L-methionine = N(4)-methylcytidine(1402) in 16S rRNA + S-adenosyl-L-homocysteine + H(+)</text>
        <dbReference type="Rhea" id="RHEA:42928"/>
        <dbReference type="Rhea" id="RHEA-COMP:10286"/>
        <dbReference type="Rhea" id="RHEA-COMP:10287"/>
        <dbReference type="ChEBI" id="CHEBI:15378"/>
        <dbReference type="ChEBI" id="CHEBI:57856"/>
        <dbReference type="ChEBI" id="CHEBI:59789"/>
        <dbReference type="ChEBI" id="CHEBI:74506"/>
        <dbReference type="ChEBI" id="CHEBI:82748"/>
        <dbReference type="EC" id="2.1.1.199"/>
    </reaction>
</comment>
<comment type="subcellular location">
    <subcellularLocation>
        <location evidence="1">Cytoplasm</location>
    </subcellularLocation>
</comment>
<comment type="similarity">
    <text evidence="1">Belongs to the methyltransferase superfamily. RsmH family.</text>
</comment>
<dbReference type="EC" id="2.1.1.199" evidence="1"/>
<dbReference type="EMBL" id="CP000083">
    <property type="protein sequence ID" value="AAZ27604.1"/>
    <property type="molecule type" value="Genomic_DNA"/>
</dbReference>
<dbReference type="RefSeq" id="WP_011045202.1">
    <property type="nucleotide sequence ID" value="NC_003910.7"/>
</dbReference>
<dbReference type="SMR" id="Q47VQ1"/>
<dbReference type="STRING" id="167879.CPS_4473"/>
<dbReference type="KEGG" id="cps:CPS_4473"/>
<dbReference type="eggNOG" id="COG0275">
    <property type="taxonomic scope" value="Bacteria"/>
</dbReference>
<dbReference type="HOGENOM" id="CLU_038422_2_0_6"/>
<dbReference type="Proteomes" id="UP000000547">
    <property type="component" value="Chromosome"/>
</dbReference>
<dbReference type="GO" id="GO:0005737">
    <property type="term" value="C:cytoplasm"/>
    <property type="evidence" value="ECO:0007669"/>
    <property type="project" value="UniProtKB-SubCell"/>
</dbReference>
<dbReference type="GO" id="GO:0071424">
    <property type="term" value="F:rRNA (cytosine-N4-)-methyltransferase activity"/>
    <property type="evidence" value="ECO:0007669"/>
    <property type="project" value="UniProtKB-UniRule"/>
</dbReference>
<dbReference type="GO" id="GO:0070475">
    <property type="term" value="P:rRNA base methylation"/>
    <property type="evidence" value="ECO:0007669"/>
    <property type="project" value="UniProtKB-UniRule"/>
</dbReference>
<dbReference type="FunFam" id="1.10.150.170:FF:000001">
    <property type="entry name" value="Ribosomal RNA small subunit methyltransferase H"/>
    <property type="match status" value="1"/>
</dbReference>
<dbReference type="Gene3D" id="1.10.150.170">
    <property type="entry name" value="Putative methyltransferase TM0872, insert domain"/>
    <property type="match status" value="1"/>
</dbReference>
<dbReference type="Gene3D" id="3.40.50.150">
    <property type="entry name" value="Vaccinia Virus protein VP39"/>
    <property type="match status" value="1"/>
</dbReference>
<dbReference type="HAMAP" id="MF_01007">
    <property type="entry name" value="16SrRNA_methyltr_H"/>
    <property type="match status" value="1"/>
</dbReference>
<dbReference type="InterPro" id="IPR002903">
    <property type="entry name" value="RsmH"/>
</dbReference>
<dbReference type="InterPro" id="IPR023397">
    <property type="entry name" value="SAM-dep_MeTrfase_MraW_recog"/>
</dbReference>
<dbReference type="InterPro" id="IPR029063">
    <property type="entry name" value="SAM-dependent_MTases_sf"/>
</dbReference>
<dbReference type="NCBIfam" id="TIGR00006">
    <property type="entry name" value="16S rRNA (cytosine(1402)-N(4))-methyltransferase RsmH"/>
    <property type="match status" value="1"/>
</dbReference>
<dbReference type="PANTHER" id="PTHR11265:SF0">
    <property type="entry name" value="12S RRNA N4-METHYLCYTIDINE METHYLTRANSFERASE"/>
    <property type="match status" value="1"/>
</dbReference>
<dbReference type="PANTHER" id="PTHR11265">
    <property type="entry name" value="S-ADENOSYL-METHYLTRANSFERASE MRAW"/>
    <property type="match status" value="1"/>
</dbReference>
<dbReference type="Pfam" id="PF01795">
    <property type="entry name" value="Methyltransf_5"/>
    <property type="match status" value="1"/>
</dbReference>
<dbReference type="PIRSF" id="PIRSF004486">
    <property type="entry name" value="MraW"/>
    <property type="match status" value="1"/>
</dbReference>
<dbReference type="SUPFAM" id="SSF81799">
    <property type="entry name" value="Putative methyltransferase TM0872, insert domain"/>
    <property type="match status" value="1"/>
</dbReference>
<dbReference type="SUPFAM" id="SSF53335">
    <property type="entry name" value="S-adenosyl-L-methionine-dependent methyltransferases"/>
    <property type="match status" value="1"/>
</dbReference>
<accession>Q47VQ1</accession>
<feature type="chain" id="PRO_0000223537" description="Ribosomal RNA small subunit methyltransferase H">
    <location>
        <begin position="1"/>
        <end position="316"/>
    </location>
</feature>
<feature type="binding site" evidence="1">
    <location>
        <begin position="35"/>
        <end position="37"/>
    </location>
    <ligand>
        <name>S-adenosyl-L-methionine</name>
        <dbReference type="ChEBI" id="CHEBI:59789"/>
    </ligand>
</feature>
<feature type="binding site" evidence="1">
    <location>
        <position position="55"/>
    </location>
    <ligand>
        <name>S-adenosyl-L-methionine</name>
        <dbReference type="ChEBI" id="CHEBI:59789"/>
    </ligand>
</feature>
<feature type="binding site" evidence="1">
    <location>
        <position position="80"/>
    </location>
    <ligand>
        <name>S-adenosyl-L-methionine</name>
        <dbReference type="ChEBI" id="CHEBI:59789"/>
    </ligand>
</feature>
<feature type="binding site" evidence="1">
    <location>
        <position position="102"/>
    </location>
    <ligand>
        <name>S-adenosyl-L-methionine</name>
        <dbReference type="ChEBI" id="CHEBI:59789"/>
    </ligand>
</feature>
<feature type="binding site" evidence="1">
    <location>
        <position position="109"/>
    </location>
    <ligand>
        <name>S-adenosyl-L-methionine</name>
        <dbReference type="ChEBI" id="CHEBI:59789"/>
    </ligand>
</feature>